<dbReference type="PIR" id="S07212">
    <property type="entry name" value="IPRYM"/>
</dbReference>
<dbReference type="GO" id="GO:0005615">
    <property type="term" value="C:extracellular space"/>
    <property type="evidence" value="ECO:0007669"/>
    <property type="project" value="TreeGrafter"/>
</dbReference>
<dbReference type="GO" id="GO:0005179">
    <property type="term" value="F:hormone activity"/>
    <property type="evidence" value="ECO:0007669"/>
    <property type="project" value="UniProtKB-KW"/>
</dbReference>
<dbReference type="GO" id="GO:0006006">
    <property type="term" value="P:glucose metabolic process"/>
    <property type="evidence" value="ECO:0007669"/>
    <property type="project" value="UniProtKB-KW"/>
</dbReference>
<dbReference type="CDD" id="cd04367">
    <property type="entry name" value="IlGF_insulin_like"/>
    <property type="match status" value="1"/>
</dbReference>
<dbReference type="Gene3D" id="1.10.100.10">
    <property type="entry name" value="Insulin-like"/>
    <property type="match status" value="1"/>
</dbReference>
<dbReference type="InterPro" id="IPR004825">
    <property type="entry name" value="Insulin"/>
</dbReference>
<dbReference type="InterPro" id="IPR016179">
    <property type="entry name" value="Insulin-like"/>
</dbReference>
<dbReference type="InterPro" id="IPR036438">
    <property type="entry name" value="Insulin-like_sf"/>
</dbReference>
<dbReference type="InterPro" id="IPR022353">
    <property type="entry name" value="Insulin_CS"/>
</dbReference>
<dbReference type="InterPro" id="IPR022352">
    <property type="entry name" value="Insulin_family"/>
</dbReference>
<dbReference type="PANTHER" id="PTHR11454:SF9">
    <property type="entry name" value="INSULIN"/>
    <property type="match status" value="1"/>
</dbReference>
<dbReference type="PANTHER" id="PTHR11454">
    <property type="entry name" value="INSULIN/INSULIN GROWTH FACTOR"/>
    <property type="match status" value="1"/>
</dbReference>
<dbReference type="Pfam" id="PF00049">
    <property type="entry name" value="Insulin"/>
    <property type="match status" value="1"/>
</dbReference>
<dbReference type="PRINTS" id="PR00277">
    <property type="entry name" value="INSULIN"/>
</dbReference>
<dbReference type="PRINTS" id="PR00276">
    <property type="entry name" value="INSULINFAMLY"/>
</dbReference>
<dbReference type="SMART" id="SM00078">
    <property type="entry name" value="IlGF"/>
    <property type="match status" value="1"/>
</dbReference>
<dbReference type="SUPFAM" id="SSF56994">
    <property type="entry name" value="Insulin-like"/>
    <property type="match status" value="1"/>
</dbReference>
<dbReference type="PROSITE" id="PS00262">
    <property type="entry name" value="INSULIN"/>
    <property type="match status" value="1"/>
</dbReference>
<reference key="1">
    <citation type="journal article" date="1986" name="Gen. Comp. Endocrinol.">
        <title>Primary structure of insulin and a truncated C-peptide from an elasmobranchian fish, Torpedo marmorata.</title>
        <authorList>
            <person name="Conlon J.M."/>
            <person name="Thim L."/>
        </authorList>
    </citation>
    <scope>PROTEIN SEQUENCE</scope>
</reference>
<evidence type="ECO:0000305" key="1"/>
<protein>
    <recommendedName>
        <fullName>Insulin</fullName>
    </recommendedName>
    <component>
        <recommendedName>
            <fullName>Insulin B chain</fullName>
        </recommendedName>
    </component>
    <component>
        <recommendedName>
            <fullName>Insulin A chain</fullName>
        </recommendedName>
    </component>
</protein>
<sequence>LPSQHLCGSHLVEALYFVCGPKGFYYLPKAXXFVDSLAGYSKHQNGGISGIVEHCCHNTCSLFDLEGYCN</sequence>
<organism>
    <name type="scientific">Torpedo marmorata</name>
    <name type="common">Marbled electric ray</name>
    <dbReference type="NCBI Taxonomy" id="7788"/>
    <lineage>
        <taxon>Eukaryota</taxon>
        <taxon>Metazoa</taxon>
        <taxon>Chordata</taxon>
        <taxon>Craniata</taxon>
        <taxon>Vertebrata</taxon>
        <taxon>Chondrichthyes</taxon>
        <taxon>Elasmobranchii</taxon>
        <taxon>Batoidea</taxon>
        <taxon>Torpediniformes</taxon>
        <taxon>Torpedinidae</taxon>
        <taxon>Torpedo</taxon>
    </lineage>
</organism>
<comment type="function">
    <text>Insulin decreases blood glucose concentration. It increases cell permeability to monosaccharides, amino acids and fatty acids. It accelerates glycolysis, the pentose phosphate cycle, and glycogen synthesis in liver.</text>
</comment>
<comment type="subunit">
    <text>Heterodimer of a B chain and an A chain linked by two disulfide bonds.</text>
</comment>
<comment type="subcellular location">
    <subcellularLocation>
        <location>Secreted</location>
    </subcellularLocation>
</comment>
<comment type="similarity">
    <text evidence="1">Belongs to the insulin family.</text>
</comment>
<comment type="caution">
    <text evidence="1">X's at positions 31-32 represent paired basic residues assumed by homology to be present in the precursor molecule.</text>
</comment>
<keyword id="KW-0119">Carbohydrate metabolism</keyword>
<keyword id="KW-0903">Direct protein sequencing</keyword>
<keyword id="KW-1015">Disulfide bond</keyword>
<keyword id="KW-0313">Glucose metabolism</keyword>
<keyword id="KW-0372">Hormone</keyword>
<keyword id="KW-0964">Secreted</keyword>
<feature type="peptide" id="PRO_0000015921" description="Insulin B chain">
    <location>
        <begin position="1"/>
        <end position="30"/>
    </location>
</feature>
<feature type="propeptide" id="PRO_0000015922" description="C peptide">
    <location>
        <begin position="33"/>
        <end position="49" status="greater than"/>
    </location>
</feature>
<feature type="peptide" id="PRO_0000015923" description="Insulin A chain">
    <location>
        <begin position="50"/>
        <end position="70"/>
    </location>
</feature>
<feature type="disulfide bond" description="Interchain (between B and A chains)">
    <location>
        <begin position="7"/>
        <end position="56"/>
    </location>
</feature>
<feature type="disulfide bond" description="Interchain (between B and A chains)">
    <location>
        <begin position="19"/>
        <end position="69"/>
    </location>
</feature>
<feature type="disulfide bond">
    <location>
        <begin position="55"/>
        <end position="60"/>
    </location>
</feature>
<feature type="non-consecutive residues" evidence="1">
    <location>
        <begin position="49"/>
        <end position="50"/>
    </location>
</feature>
<gene>
    <name type="primary">ins</name>
</gene>
<accession>P12705</accession>
<name>INS_TORMA</name>
<proteinExistence type="evidence at protein level"/>